<feature type="chain" id="PRO_0000258551" description="Small ribosomal subunit protein uS10">
    <location>
        <begin position="1"/>
        <end position="104"/>
    </location>
</feature>
<sequence length="104" mass="11918">MEKIRLKLKAYDHRVLDRSVVAIVEAVKRSGSEIRGPIPLPTKNKRYTVLRSPHVNKDSREQFEIRVYSRLIDIISATPETVDSLMKLDLAPEVDVEVTSMETK</sequence>
<name>RS10_HELPH</name>
<reference key="1">
    <citation type="journal article" date="2006" name="Proc. Natl. Acad. Sci. U.S.A.">
        <title>The complete genome sequence of a chronic atrophic gastritis Helicobacter pylori strain: evolution during disease progression.</title>
        <authorList>
            <person name="Oh J.D."/>
            <person name="Kling-Baeckhed H."/>
            <person name="Giannakis M."/>
            <person name="Xu J."/>
            <person name="Fulton R.S."/>
            <person name="Fulton L.A."/>
            <person name="Cordum H.S."/>
            <person name="Wang C."/>
            <person name="Elliott G."/>
            <person name="Edwards J."/>
            <person name="Mardis E.R."/>
            <person name="Engstrand L.G."/>
            <person name="Gordon J.I."/>
        </authorList>
    </citation>
    <scope>NUCLEOTIDE SEQUENCE [LARGE SCALE GENOMIC DNA]</scope>
    <source>
        <strain>HPAG1</strain>
    </source>
</reference>
<organism>
    <name type="scientific">Helicobacter pylori (strain HPAG1)</name>
    <dbReference type="NCBI Taxonomy" id="357544"/>
    <lineage>
        <taxon>Bacteria</taxon>
        <taxon>Pseudomonadati</taxon>
        <taxon>Campylobacterota</taxon>
        <taxon>Epsilonproteobacteria</taxon>
        <taxon>Campylobacterales</taxon>
        <taxon>Helicobacteraceae</taxon>
        <taxon>Helicobacter</taxon>
    </lineage>
</organism>
<gene>
    <name evidence="1" type="primary">rpsJ</name>
    <name type="ordered locus">HPAG1_1265</name>
</gene>
<keyword id="KW-0687">Ribonucleoprotein</keyword>
<keyword id="KW-0689">Ribosomal protein</keyword>
<comment type="function">
    <text evidence="1">Involved in the binding of tRNA to the ribosomes.</text>
</comment>
<comment type="subunit">
    <text evidence="1">Part of the 30S ribosomal subunit.</text>
</comment>
<comment type="similarity">
    <text evidence="1">Belongs to the universal ribosomal protein uS10 family.</text>
</comment>
<evidence type="ECO:0000255" key="1">
    <source>
        <dbReference type="HAMAP-Rule" id="MF_00508"/>
    </source>
</evidence>
<evidence type="ECO:0000305" key="2"/>
<accession>Q1CRU0</accession>
<protein>
    <recommendedName>
        <fullName evidence="1">Small ribosomal subunit protein uS10</fullName>
    </recommendedName>
    <alternativeName>
        <fullName evidence="2">30S ribosomal protein S10</fullName>
    </alternativeName>
</protein>
<dbReference type="EMBL" id="CP000241">
    <property type="protein sequence ID" value="ABF85332.1"/>
    <property type="molecule type" value="Genomic_DNA"/>
</dbReference>
<dbReference type="RefSeq" id="WP_000411561.1">
    <property type="nucleotide sequence ID" value="NC_008086.1"/>
</dbReference>
<dbReference type="SMR" id="Q1CRU0"/>
<dbReference type="GeneID" id="93237549"/>
<dbReference type="KEGG" id="hpa:HPAG1_1265"/>
<dbReference type="HOGENOM" id="CLU_122625_1_3_7"/>
<dbReference type="GO" id="GO:1990904">
    <property type="term" value="C:ribonucleoprotein complex"/>
    <property type="evidence" value="ECO:0007669"/>
    <property type="project" value="UniProtKB-KW"/>
</dbReference>
<dbReference type="GO" id="GO:0005840">
    <property type="term" value="C:ribosome"/>
    <property type="evidence" value="ECO:0007669"/>
    <property type="project" value="UniProtKB-KW"/>
</dbReference>
<dbReference type="GO" id="GO:0003735">
    <property type="term" value="F:structural constituent of ribosome"/>
    <property type="evidence" value="ECO:0007669"/>
    <property type="project" value="InterPro"/>
</dbReference>
<dbReference type="GO" id="GO:0000049">
    <property type="term" value="F:tRNA binding"/>
    <property type="evidence" value="ECO:0007669"/>
    <property type="project" value="UniProtKB-UniRule"/>
</dbReference>
<dbReference type="GO" id="GO:0006412">
    <property type="term" value="P:translation"/>
    <property type="evidence" value="ECO:0007669"/>
    <property type="project" value="UniProtKB-UniRule"/>
</dbReference>
<dbReference type="FunFam" id="3.30.70.600:FF:000003">
    <property type="entry name" value="30S ribosomal protein S10"/>
    <property type="match status" value="1"/>
</dbReference>
<dbReference type="Gene3D" id="3.30.70.600">
    <property type="entry name" value="Ribosomal protein S10 domain"/>
    <property type="match status" value="1"/>
</dbReference>
<dbReference type="HAMAP" id="MF_00508">
    <property type="entry name" value="Ribosomal_uS10"/>
    <property type="match status" value="1"/>
</dbReference>
<dbReference type="InterPro" id="IPR001848">
    <property type="entry name" value="Ribosomal_uS10"/>
</dbReference>
<dbReference type="InterPro" id="IPR018268">
    <property type="entry name" value="Ribosomal_uS10_CS"/>
</dbReference>
<dbReference type="InterPro" id="IPR027486">
    <property type="entry name" value="Ribosomal_uS10_dom"/>
</dbReference>
<dbReference type="InterPro" id="IPR036838">
    <property type="entry name" value="Ribosomal_uS10_dom_sf"/>
</dbReference>
<dbReference type="NCBIfam" id="NF001861">
    <property type="entry name" value="PRK00596.1"/>
    <property type="match status" value="1"/>
</dbReference>
<dbReference type="NCBIfam" id="TIGR01049">
    <property type="entry name" value="rpsJ_bact"/>
    <property type="match status" value="1"/>
</dbReference>
<dbReference type="PANTHER" id="PTHR11700">
    <property type="entry name" value="30S RIBOSOMAL PROTEIN S10 FAMILY MEMBER"/>
    <property type="match status" value="1"/>
</dbReference>
<dbReference type="Pfam" id="PF00338">
    <property type="entry name" value="Ribosomal_S10"/>
    <property type="match status" value="1"/>
</dbReference>
<dbReference type="PRINTS" id="PR00971">
    <property type="entry name" value="RIBOSOMALS10"/>
</dbReference>
<dbReference type="SMART" id="SM01403">
    <property type="entry name" value="Ribosomal_S10"/>
    <property type="match status" value="1"/>
</dbReference>
<dbReference type="SUPFAM" id="SSF54999">
    <property type="entry name" value="Ribosomal protein S10"/>
    <property type="match status" value="1"/>
</dbReference>
<dbReference type="PROSITE" id="PS00361">
    <property type="entry name" value="RIBOSOMAL_S10"/>
    <property type="match status" value="1"/>
</dbReference>
<proteinExistence type="inferred from homology"/>